<sequence length="330" mass="38006">MSNKSAWQPQFDEIHSSVQEAEGFLQSSNDVQKAIDEVHYPDSLNDLSEISKNLYISSWKTASELVSTSDKGIDYTLSAMSINPNLSVPEQQHLWLQIEDSSSQNILQYFEKSNKFIAFALSKNAKVLVHCFAGISRSVTLVAAYLMKENNWNTEEALSHINERRSGISPNANFLRQLRVYFECNYQLDRSLRPYRQWLFRRYGDFAVLNTRVPSEVAYAETVRARAGQLELRCKKCRFVLASSDYLVSHEPKDENNYSHTRCTHYFLEPIRWMQPELELGNLEGRFDCPKCNSKIGSYKWQGLQCSCLQWVCPALSILQSRVDAVRKLG</sequence>
<organism>
    <name type="scientific">Schizosaccharomyces pombe (strain 972 / ATCC 24843)</name>
    <name type="common">Fission yeast</name>
    <dbReference type="NCBI Taxonomy" id="284812"/>
    <lineage>
        <taxon>Eukaryota</taxon>
        <taxon>Fungi</taxon>
        <taxon>Dikarya</taxon>
        <taxon>Ascomycota</taxon>
        <taxon>Taphrinomycotina</taxon>
        <taxon>Schizosaccharomycetes</taxon>
        <taxon>Schizosaccharomycetales</taxon>
        <taxon>Schizosaccharomycetaceae</taxon>
        <taxon>Schizosaccharomyces</taxon>
    </lineage>
</organism>
<keyword id="KW-0963">Cytoplasm</keyword>
<keyword id="KW-0378">Hydrolase</keyword>
<keyword id="KW-0539">Nucleus</keyword>
<keyword id="KW-0904">Protein phosphatase</keyword>
<keyword id="KW-1185">Reference proteome</keyword>
<keyword id="KW-0346">Stress response</keyword>
<evidence type="ECO:0000250" key="1"/>
<evidence type="ECO:0000255" key="2">
    <source>
        <dbReference type="PROSITE-ProRule" id="PRU00160"/>
    </source>
</evidence>
<evidence type="ECO:0000305" key="3"/>
<gene>
    <name type="primary">yvh1</name>
    <name type="ORF">pi040</name>
    <name type="ORF">SPBC17A3.06</name>
</gene>
<reference key="1">
    <citation type="journal article" date="2000" name="Yeast">
        <title>A 38 kb segment containing the cdc2 gene from the left arm of fission yeast chromosome II: sequence analysis and characterization of the genomic DNA and cDNAs encoded on the segment.</title>
        <authorList>
            <person name="Machida M."/>
            <person name="Yamazaki S."/>
            <person name="Kunihiro S."/>
            <person name="Tanaka T."/>
            <person name="Kushida N."/>
            <person name="Jinno K."/>
            <person name="Haikawa Y."/>
            <person name="Yamazaki J."/>
            <person name="Yamamoto S."/>
            <person name="Sekine M."/>
            <person name="Oguchi A."/>
            <person name="Nagai Y."/>
            <person name="Sakai M."/>
            <person name="Aoki K."/>
            <person name="Ogura K."/>
            <person name="Kudoh Y."/>
            <person name="Kikuchi H."/>
            <person name="Zhang M.Q."/>
            <person name="Yanagida M."/>
        </authorList>
    </citation>
    <scope>NUCLEOTIDE SEQUENCE [GENOMIC DNA]</scope>
    <source>
        <strain>972 / ATCC 24843</strain>
    </source>
</reference>
<reference key="2">
    <citation type="journal article" date="2002" name="Nature">
        <title>The genome sequence of Schizosaccharomyces pombe.</title>
        <authorList>
            <person name="Wood V."/>
            <person name="Gwilliam R."/>
            <person name="Rajandream M.A."/>
            <person name="Lyne M.H."/>
            <person name="Lyne R."/>
            <person name="Stewart A."/>
            <person name="Sgouros J.G."/>
            <person name="Peat N."/>
            <person name="Hayles J."/>
            <person name="Baker S.G."/>
            <person name="Basham D."/>
            <person name="Bowman S."/>
            <person name="Brooks K."/>
            <person name="Brown D."/>
            <person name="Brown S."/>
            <person name="Chillingworth T."/>
            <person name="Churcher C.M."/>
            <person name="Collins M."/>
            <person name="Connor R."/>
            <person name="Cronin A."/>
            <person name="Davis P."/>
            <person name="Feltwell T."/>
            <person name="Fraser A."/>
            <person name="Gentles S."/>
            <person name="Goble A."/>
            <person name="Hamlin N."/>
            <person name="Harris D.E."/>
            <person name="Hidalgo J."/>
            <person name="Hodgson G."/>
            <person name="Holroyd S."/>
            <person name="Hornsby T."/>
            <person name="Howarth S."/>
            <person name="Huckle E.J."/>
            <person name="Hunt S."/>
            <person name="Jagels K."/>
            <person name="James K.D."/>
            <person name="Jones L."/>
            <person name="Jones M."/>
            <person name="Leather S."/>
            <person name="McDonald S."/>
            <person name="McLean J."/>
            <person name="Mooney P."/>
            <person name="Moule S."/>
            <person name="Mungall K.L."/>
            <person name="Murphy L.D."/>
            <person name="Niblett D."/>
            <person name="Odell C."/>
            <person name="Oliver K."/>
            <person name="O'Neil S."/>
            <person name="Pearson D."/>
            <person name="Quail M.A."/>
            <person name="Rabbinowitsch E."/>
            <person name="Rutherford K.M."/>
            <person name="Rutter S."/>
            <person name="Saunders D."/>
            <person name="Seeger K."/>
            <person name="Sharp S."/>
            <person name="Skelton J."/>
            <person name="Simmonds M.N."/>
            <person name="Squares R."/>
            <person name="Squares S."/>
            <person name="Stevens K."/>
            <person name="Taylor K."/>
            <person name="Taylor R.G."/>
            <person name="Tivey A."/>
            <person name="Walsh S.V."/>
            <person name="Warren T."/>
            <person name="Whitehead S."/>
            <person name="Woodward J.R."/>
            <person name="Volckaert G."/>
            <person name="Aert R."/>
            <person name="Robben J."/>
            <person name="Grymonprez B."/>
            <person name="Weltjens I."/>
            <person name="Vanstreels E."/>
            <person name="Rieger M."/>
            <person name="Schaefer M."/>
            <person name="Mueller-Auer S."/>
            <person name="Gabel C."/>
            <person name="Fuchs M."/>
            <person name="Duesterhoeft A."/>
            <person name="Fritzc C."/>
            <person name="Holzer E."/>
            <person name="Moestl D."/>
            <person name="Hilbert H."/>
            <person name="Borzym K."/>
            <person name="Langer I."/>
            <person name="Beck A."/>
            <person name="Lehrach H."/>
            <person name="Reinhardt R."/>
            <person name="Pohl T.M."/>
            <person name="Eger P."/>
            <person name="Zimmermann W."/>
            <person name="Wedler H."/>
            <person name="Wambutt R."/>
            <person name="Purnelle B."/>
            <person name="Goffeau A."/>
            <person name="Cadieu E."/>
            <person name="Dreano S."/>
            <person name="Gloux S."/>
            <person name="Lelaure V."/>
            <person name="Mottier S."/>
            <person name="Galibert F."/>
            <person name="Aves S.J."/>
            <person name="Xiang Z."/>
            <person name="Hunt C."/>
            <person name="Moore K."/>
            <person name="Hurst S.M."/>
            <person name="Lucas M."/>
            <person name="Rochet M."/>
            <person name="Gaillardin C."/>
            <person name="Tallada V.A."/>
            <person name="Garzon A."/>
            <person name="Thode G."/>
            <person name="Daga R.R."/>
            <person name="Cruzado L."/>
            <person name="Jimenez J."/>
            <person name="Sanchez M."/>
            <person name="del Rey F."/>
            <person name="Benito J."/>
            <person name="Dominguez A."/>
            <person name="Revuelta J.L."/>
            <person name="Moreno S."/>
            <person name="Armstrong J."/>
            <person name="Forsburg S.L."/>
            <person name="Cerutti L."/>
            <person name="Lowe T."/>
            <person name="McCombie W.R."/>
            <person name="Paulsen I."/>
            <person name="Potashkin J."/>
            <person name="Shpakovski G.V."/>
            <person name="Ussery D."/>
            <person name="Barrell B.G."/>
            <person name="Nurse P."/>
        </authorList>
    </citation>
    <scope>NUCLEOTIDE SEQUENCE [LARGE SCALE GENOMIC DNA]</scope>
    <source>
        <strain>972 / ATCC 24843</strain>
    </source>
</reference>
<comment type="function">
    <text evidence="1">May be directly involved in signal transduction and/or cell cycle regulation. It is necessary for maintaining growth rate or spore germination. Could show both activity toward tyrosine-protein phosphate as well as with serine-protein phosphate (By similarity).</text>
</comment>
<comment type="catalytic activity">
    <reaction>
        <text>O-phospho-L-tyrosyl-[protein] + H2O = L-tyrosyl-[protein] + phosphate</text>
        <dbReference type="Rhea" id="RHEA:10684"/>
        <dbReference type="Rhea" id="RHEA-COMP:10136"/>
        <dbReference type="Rhea" id="RHEA-COMP:20101"/>
        <dbReference type="ChEBI" id="CHEBI:15377"/>
        <dbReference type="ChEBI" id="CHEBI:43474"/>
        <dbReference type="ChEBI" id="CHEBI:46858"/>
        <dbReference type="ChEBI" id="CHEBI:61978"/>
        <dbReference type="EC" id="3.1.3.48"/>
    </reaction>
</comment>
<comment type="subcellular location">
    <subcellularLocation>
        <location>Cytoplasm</location>
    </subcellularLocation>
    <subcellularLocation>
        <location>Nucleus</location>
    </subcellularLocation>
</comment>
<comment type="similarity">
    <text evidence="3">Belongs to the protein-tyrosine phosphatase family. Non-receptor class dual specificity subfamily.</text>
</comment>
<protein>
    <recommendedName>
        <fullName>Tyrosine-protein phosphatase yvh1</fullName>
        <shortName>PTPase yvh1</shortName>
        <ecNumber>3.1.3.48</ecNumber>
    </recommendedName>
</protein>
<name>PVH1_SCHPO</name>
<proteinExistence type="inferred from homology"/>
<feature type="chain" id="PRO_0000314761" description="Tyrosine-protein phosphatase yvh1">
    <location>
        <begin position="1"/>
        <end position="330"/>
    </location>
</feature>
<feature type="domain" description="Tyrosine-protein phosphatase" evidence="2">
    <location>
        <begin position="45"/>
        <end position="187"/>
    </location>
</feature>
<feature type="active site" description="Phosphocysteine intermediate" evidence="2">
    <location>
        <position position="131"/>
    </location>
</feature>
<accession>O13632</accession>
<dbReference type="EC" id="3.1.3.48"/>
<dbReference type="EMBL" id="AB004537">
    <property type="protein sequence ID" value="BAA21420.1"/>
    <property type="molecule type" value="Genomic_DNA"/>
</dbReference>
<dbReference type="EMBL" id="CU329671">
    <property type="protein sequence ID" value="CAB51765.1"/>
    <property type="molecule type" value="Genomic_DNA"/>
</dbReference>
<dbReference type="PIR" id="T39698">
    <property type="entry name" value="T39698"/>
</dbReference>
<dbReference type="RefSeq" id="NP_595588.1">
    <property type="nucleotide sequence ID" value="NM_001021484.2"/>
</dbReference>
<dbReference type="SMR" id="O13632"/>
<dbReference type="BioGRID" id="276683">
    <property type="interactions" value="99"/>
</dbReference>
<dbReference type="FunCoup" id="O13632">
    <property type="interactions" value="682"/>
</dbReference>
<dbReference type="STRING" id="284812.O13632"/>
<dbReference type="PaxDb" id="4896-SPBC17A3.06.1"/>
<dbReference type="EnsemblFungi" id="SPBC17A3.06.1">
    <property type="protein sequence ID" value="SPBC17A3.06.1:pep"/>
    <property type="gene ID" value="SPBC17A3.06"/>
</dbReference>
<dbReference type="KEGG" id="spo:2540146"/>
<dbReference type="PomBase" id="SPBC17A3.06"/>
<dbReference type="VEuPathDB" id="FungiDB:SPBC17A3.06"/>
<dbReference type="eggNOG" id="KOG1716">
    <property type="taxonomic scope" value="Eukaryota"/>
</dbReference>
<dbReference type="HOGENOM" id="CLU_023312_0_1_1"/>
<dbReference type="InParanoid" id="O13632"/>
<dbReference type="OMA" id="FAWQGMQ"/>
<dbReference type="PhylomeDB" id="O13632"/>
<dbReference type="PRO" id="PR:O13632"/>
<dbReference type="Proteomes" id="UP000002485">
    <property type="component" value="Chromosome II"/>
</dbReference>
<dbReference type="GO" id="GO:0005829">
    <property type="term" value="C:cytosol"/>
    <property type="evidence" value="ECO:0007005"/>
    <property type="project" value="PomBase"/>
</dbReference>
<dbReference type="GO" id="GO:0005634">
    <property type="term" value="C:nucleus"/>
    <property type="evidence" value="ECO:0007005"/>
    <property type="project" value="PomBase"/>
</dbReference>
<dbReference type="GO" id="GO:0004725">
    <property type="term" value="F:protein tyrosine phosphatase activity"/>
    <property type="evidence" value="ECO:0000266"/>
    <property type="project" value="PomBase"/>
</dbReference>
<dbReference type="GO" id="GO:0008138">
    <property type="term" value="F:protein tyrosine/serine/threonine phosphatase activity"/>
    <property type="evidence" value="ECO:0000318"/>
    <property type="project" value="GO_Central"/>
</dbReference>
<dbReference type="GO" id="GO:0180023">
    <property type="term" value="P:cytosolic large ribosomal subunit assembly"/>
    <property type="evidence" value="ECO:0000266"/>
    <property type="project" value="PomBase"/>
</dbReference>
<dbReference type="GO" id="GO:0023052">
    <property type="term" value="P:signaling"/>
    <property type="evidence" value="ECO:0000303"/>
    <property type="project" value="PomBase"/>
</dbReference>
<dbReference type="CDD" id="cd14498">
    <property type="entry name" value="DSP"/>
    <property type="match status" value="1"/>
</dbReference>
<dbReference type="Gene3D" id="3.90.190.10">
    <property type="entry name" value="Protein tyrosine phosphatase superfamily"/>
    <property type="match status" value="1"/>
</dbReference>
<dbReference type="InterPro" id="IPR000340">
    <property type="entry name" value="Dual-sp_phosphatase_cat-dom"/>
</dbReference>
<dbReference type="InterPro" id="IPR016278">
    <property type="entry name" value="DUSP12"/>
</dbReference>
<dbReference type="InterPro" id="IPR029021">
    <property type="entry name" value="Prot-tyrosine_phosphatase-like"/>
</dbReference>
<dbReference type="InterPro" id="IPR003595">
    <property type="entry name" value="Tyr_Pase_cat"/>
</dbReference>
<dbReference type="InterPro" id="IPR000387">
    <property type="entry name" value="Tyr_Pase_dom"/>
</dbReference>
<dbReference type="InterPro" id="IPR020422">
    <property type="entry name" value="TYR_PHOSPHATASE_DUAL_dom"/>
</dbReference>
<dbReference type="PANTHER" id="PTHR45848:SF4">
    <property type="entry name" value="DUAL SPECIFICITY PROTEIN PHOSPHATASE 12"/>
    <property type="match status" value="1"/>
</dbReference>
<dbReference type="PANTHER" id="PTHR45848">
    <property type="entry name" value="DUAL SPECIFICITY PROTEIN PHOSPHATASE 12 FAMILY MEMBER"/>
    <property type="match status" value="1"/>
</dbReference>
<dbReference type="Pfam" id="PF00782">
    <property type="entry name" value="DSPc"/>
    <property type="match status" value="1"/>
</dbReference>
<dbReference type="PIRSF" id="PIRSF000941">
    <property type="entry name" value="DUSP12"/>
    <property type="match status" value="1"/>
</dbReference>
<dbReference type="SMART" id="SM00195">
    <property type="entry name" value="DSPc"/>
    <property type="match status" value="1"/>
</dbReference>
<dbReference type="SMART" id="SM00404">
    <property type="entry name" value="PTPc_motif"/>
    <property type="match status" value="1"/>
</dbReference>
<dbReference type="SUPFAM" id="SSF52799">
    <property type="entry name" value="(Phosphotyrosine protein) phosphatases II"/>
    <property type="match status" value="1"/>
</dbReference>
<dbReference type="PROSITE" id="PS50056">
    <property type="entry name" value="TYR_PHOSPHATASE_2"/>
    <property type="match status" value="1"/>
</dbReference>
<dbReference type="PROSITE" id="PS50054">
    <property type="entry name" value="TYR_PHOSPHATASE_DUAL"/>
    <property type="match status" value="1"/>
</dbReference>